<proteinExistence type="inferred from homology"/>
<keyword id="KW-0012">Acyltransferase</keyword>
<keyword id="KW-0133">Cell shape</keyword>
<keyword id="KW-0961">Cell wall biogenesis/degradation</keyword>
<keyword id="KW-0963">Cytoplasm</keyword>
<keyword id="KW-0460">Magnesium</keyword>
<keyword id="KW-0479">Metal-binding</keyword>
<keyword id="KW-0511">Multifunctional enzyme</keyword>
<keyword id="KW-0548">Nucleotidyltransferase</keyword>
<keyword id="KW-0573">Peptidoglycan synthesis</keyword>
<keyword id="KW-0677">Repeat</keyword>
<keyword id="KW-0808">Transferase</keyword>
<comment type="function">
    <text evidence="1">Catalyzes the last two sequential reactions in the de novo biosynthetic pathway for UDP-N-acetylglucosamine (UDP-GlcNAc). The C-terminal domain catalyzes the transfer of acetyl group from acetyl coenzyme A to glucosamine-1-phosphate (GlcN-1-P) to produce N-acetylglucosamine-1-phosphate (GlcNAc-1-P), which is converted into UDP-GlcNAc by the transfer of uridine 5-monophosphate (from uridine 5-triphosphate), a reaction catalyzed by the N-terminal domain.</text>
</comment>
<comment type="catalytic activity">
    <reaction evidence="1">
        <text>alpha-D-glucosamine 1-phosphate + acetyl-CoA = N-acetyl-alpha-D-glucosamine 1-phosphate + CoA + H(+)</text>
        <dbReference type="Rhea" id="RHEA:13725"/>
        <dbReference type="ChEBI" id="CHEBI:15378"/>
        <dbReference type="ChEBI" id="CHEBI:57287"/>
        <dbReference type="ChEBI" id="CHEBI:57288"/>
        <dbReference type="ChEBI" id="CHEBI:57776"/>
        <dbReference type="ChEBI" id="CHEBI:58516"/>
        <dbReference type="EC" id="2.3.1.157"/>
    </reaction>
</comment>
<comment type="catalytic activity">
    <reaction evidence="1">
        <text>N-acetyl-alpha-D-glucosamine 1-phosphate + UTP + H(+) = UDP-N-acetyl-alpha-D-glucosamine + diphosphate</text>
        <dbReference type="Rhea" id="RHEA:13509"/>
        <dbReference type="ChEBI" id="CHEBI:15378"/>
        <dbReference type="ChEBI" id="CHEBI:33019"/>
        <dbReference type="ChEBI" id="CHEBI:46398"/>
        <dbReference type="ChEBI" id="CHEBI:57705"/>
        <dbReference type="ChEBI" id="CHEBI:57776"/>
        <dbReference type="EC" id="2.7.7.23"/>
    </reaction>
</comment>
<comment type="cofactor">
    <cofactor evidence="1">
        <name>Mg(2+)</name>
        <dbReference type="ChEBI" id="CHEBI:18420"/>
    </cofactor>
    <text evidence="1">Binds 1 Mg(2+) ion per subunit.</text>
</comment>
<comment type="pathway">
    <text evidence="1">Nucleotide-sugar biosynthesis; UDP-N-acetyl-alpha-D-glucosamine biosynthesis; N-acetyl-alpha-D-glucosamine 1-phosphate from alpha-D-glucosamine 6-phosphate (route II): step 2/2.</text>
</comment>
<comment type="pathway">
    <text evidence="1">Nucleotide-sugar biosynthesis; UDP-N-acetyl-alpha-D-glucosamine biosynthesis; UDP-N-acetyl-alpha-D-glucosamine from N-acetyl-alpha-D-glucosamine 1-phosphate: step 1/1.</text>
</comment>
<comment type="pathway">
    <text evidence="1">Bacterial outer membrane biogenesis; LPS lipid A biosynthesis.</text>
</comment>
<comment type="subunit">
    <text evidence="1">Homotrimer.</text>
</comment>
<comment type="subcellular location">
    <subcellularLocation>
        <location evidence="1">Cytoplasm</location>
    </subcellularLocation>
</comment>
<comment type="similarity">
    <text evidence="1">In the N-terminal section; belongs to the N-acetylglucosamine-1-phosphate uridyltransferase family.</text>
</comment>
<comment type="similarity">
    <text evidence="1">In the C-terminal section; belongs to the transferase hexapeptide repeat family.</text>
</comment>
<protein>
    <recommendedName>
        <fullName evidence="1">Bifunctional protein GlmU</fullName>
    </recommendedName>
    <domain>
        <recommendedName>
            <fullName evidence="1">UDP-N-acetylglucosamine pyrophosphorylase</fullName>
            <ecNumber evidence="1">2.7.7.23</ecNumber>
        </recommendedName>
        <alternativeName>
            <fullName evidence="1">N-acetylglucosamine-1-phosphate uridyltransferase</fullName>
        </alternativeName>
    </domain>
    <domain>
        <recommendedName>
            <fullName evidence="1">Glucosamine-1-phosphate N-acetyltransferase</fullName>
            <ecNumber evidence="1">2.3.1.157</ecNumber>
        </recommendedName>
    </domain>
</protein>
<evidence type="ECO:0000255" key="1">
    <source>
        <dbReference type="HAMAP-Rule" id="MF_01631"/>
    </source>
</evidence>
<organism>
    <name type="scientific">Vibrio parahaemolyticus serotype O3:K6 (strain RIMD 2210633)</name>
    <dbReference type="NCBI Taxonomy" id="223926"/>
    <lineage>
        <taxon>Bacteria</taxon>
        <taxon>Pseudomonadati</taxon>
        <taxon>Pseudomonadota</taxon>
        <taxon>Gammaproteobacteria</taxon>
        <taxon>Vibrionales</taxon>
        <taxon>Vibrionaceae</taxon>
        <taxon>Vibrio</taxon>
    </lineage>
</organism>
<feature type="chain" id="PRO_0000233874" description="Bifunctional protein GlmU">
    <location>
        <begin position="1"/>
        <end position="453"/>
    </location>
</feature>
<feature type="region of interest" description="Pyrophosphorylase" evidence="1">
    <location>
        <begin position="1"/>
        <end position="226"/>
    </location>
</feature>
<feature type="region of interest" description="Linker" evidence="1">
    <location>
        <begin position="227"/>
        <end position="247"/>
    </location>
</feature>
<feature type="region of interest" description="N-acetyltransferase" evidence="1">
    <location>
        <begin position="248"/>
        <end position="453"/>
    </location>
</feature>
<feature type="active site" description="Proton acceptor" evidence="1">
    <location>
        <position position="360"/>
    </location>
</feature>
<feature type="binding site" evidence="1">
    <location>
        <begin position="8"/>
        <end position="11"/>
    </location>
    <ligand>
        <name>UDP-N-acetyl-alpha-D-glucosamine</name>
        <dbReference type="ChEBI" id="CHEBI:57705"/>
    </ligand>
</feature>
<feature type="binding site" evidence="1">
    <location>
        <position position="22"/>
    </location>
    <ligand>
        <name>UDP-N-acetyl-alpha-D-glucosamine</name>
        <dbReference type="ChEBI" id="CHEBI:57705"/>
    </ligand>
</feature>
<feature type="binding site" evidence="1">
    <location>
        <position position="73"/>
    </location>
    <ligand>
        <name>UDP-N-acetyl-alpha-D-glucosamine</name>
        <dbReference type="ChEBI" id="CHEBI:57705"/>
    </ligand>
</feature>
<feature type="binding site" evidence="1">
    <location>
        <begin position="78"/>
        <end position="79"/>
    </location>
    <ligand>
        <name>UDP-N-acetyl-alpha-D-glucosamine</name>
        <dbReference type="ChEBI" id="CHEBI:57705"/>
    </ligand>
</feature>
<feature type="binding site" evidence="1">
    <location>
        <begin position="100"/>
        <end position="102"/>
    </location>
    <ligand>
        <name>UDP-N-acetyl-alpha-D-glucosamine</name>
        <dbReference type="ChEBI" id="CHEBI:57705"/>
    </ligand>
</feature>
<feature type="binding site" evidence="1">
    <location>
        <position position="102"/>
    </location>
    <ligand>
        <name>Mg(2+)</name>
        <dbReference type="ChEBI" id="CHEBI:18420"/>
    </ligand>
</feature>
<feature type="binding site" evidence="1">
    <location>
        <position position="137"/>
    </location>
    <ligand>
        <name>UDP-N-acetyl-alpha-D-glucosamine</name>
        <dbReference type="ChEBI" id="CHEBI:57705"/>
    </ligand>
</feature>
<feature type="binding site" evidence="1">
    <location>
        <position position="151"/>
    </location>
    <ligand>
        <name>UDP-N-acetyl-alpha-D-glucosamine</name>
        <dbReference type="ChEBI" id="CHEBI:57705"/>
    </ligand>
</feature>
<feature type="binding site" evidence="1">
    <location>
        <position position="166"/>
    </location>
    <ligand>
        <name>UDP-N-acetyl-alpha-D-glucosamine</name>
        <dbReference type="ChEBI" id="CHEBI:57705"/>
    </ligand>
</feature>
<feature type="binding site" evidence="1">
    <location>
        <position position="224"/>
    </location>
    <ligand>
        <name>Mg(2+)</name>
        <dbReference type="ChEBI" id="CHEBI:18420"/>
    </ligand>
</feature>
<feature type="binding site" evidence="1">
    <location>
        <position position="224"/>
    </location>
    <ligand>
        <name>UDP-N-acetyl-alpha-D-glucosamine</name>
        <dbReference type="ChEBI" id="CHEBI:57705"/>
    </ligand>
</feature>
<feature type="binding site" evidence="1">
    <location>
        <position position="330"/>
    </location>
    <ligand>
        <name>UDP-N-acetyl-alpha-D-glucosamine</name>
        <dbReference type="ChEBI" id="CHEBI:57705"/>
    </ligand>
</feature>
<feature type="binding site" evidence="1">
    <location>
        <position position="348"/>
    </location>
    <ligand>
        <name>UDP-N-acetyl-alpha-D-glucosamine</name>
        <dbReference type="ChEBI" id="CHEBI:57705"/>
    </ligand>
</feature>
<feature type="binding site" evidence="1">
    <location>
        <position position="363"/>
    </location>
    <ligand>
        <name>UDP-N-acetyl-alpha-D-glucosamine</name>
        <dbReference type="ChEBI" id="CHEBI:57705"/>
    </ligand>
</feature>
<feature type="binding site" evidence="1">
    <location>
        <position position="374"/>
    </location>
    <ligand>
        <name>UDP-N-acetyl-alpha-D-glucosamine</name>
        <dbReference type="ChEBI" id="CHEBI:57705"/>
    </ligand>
</feature>
<feature type="binding site" evidence="1">
    <location>
        <position position="377"/>
    </location>
    <ligand>
        <name>acetyl-CoA</name>
        <dbReference type="ChEBI" id="CHEBI:57288"/>
    </ligand>
</feature>
<feature type="binding site" evidence="1">
    <location>
        <begin position="383"/>
        <end position="384"/>
    </location>
    <ligand>
        <name>acetyl-CoA</name>
        <dbReference type="ChEBI" id="CHEBI:57288"/>
    </ligand>
</feature>
<feature type="binding site" evidence="1">
    <location>
        <position position="402"/>
    </location>
    <ligand>
        <name>acetyl-CoA</name>
        <dbReference type="ChEBI" id="CHEBI:57288"/>
    </ligand>
</feature>
<feature type="binding site" evidence="1">
    <location>
        <position position="420"/>
    </location>
    <ligand>
        <name>acetyl-CoA</name>
        <dbReference type="ChEBI" id="CHEBI:57288"/>
    </ligand>
</feature>
<feature type="binding site" evidence="1">
    <location>
        <position position="437"/>
    </location>
    <ligand>
        <name>acetyl-CoA</name>
        <dbReference type="ChEBI" id="CHEBI:57288"/>
    </ligand>
</feature>
<reference key="1">
    <citation type="journal article" date="2003" name="Lancet">
        <title>Genome sequence of Vibrio parahaemolyticus: a pathogenic mechanism distinct from that of V. cholerae.</title>
        <authorList>
            <person name="Makino K."/>
            <person name="Oshima K."/>
            <person name="Kurokawa K."/>
            <person name="Yokoyama K."/>
            <person name="Uda T."/>
            <person name="Tagomori K."/>
            <person name="Iijima Y."/>
            <person name="Najima M."/>
            <person name="Nakano M."/>
            <person name="Yamashita A."/>
            <person name="Kubota Y."/>
            <person name="Kimura S."/>
            <person name="Yasunaga T."/>
            <person name="Honda T."/>
            <person name="Shinagawa H."/>
            <person name="Hattori M."/>
            <person name="Iida T."/>
        </authorList>
    </citation>
    <scope>NUCLEOTIDE SEQUENCE [LARGE SCALE GENOMIC DNA]</scope>
    <source>
        <strain>RIMD 2210633</strain>
    </source>
</reference>
<name>GLMU_VIBPA</name>
<gene>
    <name evidence="1" type="primary">glmU</name>
    <name type="ordered locus">VP3067</name>
</gene>
<sequence length="453" mass="48724">MKFSAVILAAGKGTRMHSNMPKVLHTLAGKPMVKHVIDTCTGLGAQNIHLVFGHGGDQMQTTLADETVNWILQADQLGTGHAVDQASPRFEDDEKILVLYGDVPLISPETIENLLDAQPTGGIALLTVMLDNPTGYGRIIRKNGPVVAIVEQKDASEEQKQIKEINTGVMVATGGDLKRWLSGLNNNNAQGEYYLTDVIAAAHDEGRAVEAVHPVNAIEVEGVNDRAQLARLERAFQSMQAQKLLEQGVMLRDPARFDLRGELQCGMDCEIDANVIIEGNVSLGDNVIIGTGCVLKDCEIDDNTIVRPYSVIEGATVGEECTVGPFTRLRPGAELRNDAHVGNFVEVKNARIGEGSKANHLTYLGDAEIGQRTNIGAGTITCNYDGANKFKTIIGNDVFVGSDSQLVAPVTIADGATIGAGTTLTKDVEEGELVITRVKERKITGWQRPVKQK</sequence>
<accession>Q87KB0</accession>
<dbReference type="EC" id="2.7.7.23" evidence="1"/>
<dbReference type="EC" id="2.3.1.157" evidence="1"/>
<dbReference type="EMBL" id="BA000031">
    <property type="protein sequence ID" value="BAC61330.1"/>
    <property type="molecule type" value="Genomic_DNA"/>
</dbReference>
<dbReference type="RefSeq" id="NP_799446.1">
    <property type="nucleotide sequence ID" value="NC_004603.1"/>
</dbReference>
<dbReference type="RefSeq" id="WP_005456025.1">
    <property type="nucleotide sequence ID" value="NC_004603.1"/>
</dbReference>
<dbReference type="SMR" id="Q87KB0"/>
<dbReference type="GeneID" id="1190666"/>
<dbReference type="KEGG" id="vpa:VP3067"/>
<dbReference type="PATRIC" id="fig|223926.6.peg.2953"/>
<dbReference type="eggNOG" id="COG1207">
    <property type="taxonomic scope" value="Bacteria"/>
</dbReference>
<dbReference type="HOGENOM" id="CLU_029499_15_2_6"/>
<dbReference type="UniPathway" id="UPA00113">
    <property type="reaction ID" value="UER00532"/>
</dbReference>
<dbReference type="UniPathway" id="UPA00113">
    <property type="reaction ID" value="UER00533"/>
</dbReference>
<dbReference type="UniPathway" id="UPA00973"/>
<dbReference type="Proteomes" id="UP000002493">
    <property type="component" value="Chromosome 1"/>
</dbReference>
<dbReference type="GO" id="GO:0005737">
    <property type="term" value="C:cytoplasm"/>
    <property type="evidence" value="ECO:0007669"/>
    <property type="project" value="UniProtKB-SubCell"/>
</dbReference>
<dbReference type="GO" id="GO:0016020">
    <property type="term" value="C:membrane"/>
    <property type="evidence" value="ECO:0007669"/>
    <property type="project" value="GOC"/>
</dbReference>
<dbReference type="GO" id="GO:0019134">
    <property type="term" value="F:glucosamine-1-phosphate N-acetyltransferase activity"/>
    <property type="evidence" value="ECO:0007669"/>
    <property type="project" value="UniProtKB-UniRule"/>
</dbReference>
<dbReference type="GO" id="GO:0000287">
    <property type="term" value="F:magnesium ion binding"/>
    <property type="evidence" value="ECO:0007669"/>
    <property type="project" value="UniProtKB-UniRule"/>
</dbReference>
<dbReference type="GO" id="GO:0003977">
    <property type="term" value="F:UDP-N-acetylglucosamine diphosphorylase activity"/>
    <property type="evidence" value="ECO:0007669"/>
    <property type="project" value="UniProtKB-UniRule"/>
</dbReference>
<dbReference type="GO" id="GO:0000902">
    <property type="term" value="P:cell morphogenesis"/>
    <property type="evidence" value="ECO:0007669"/>
    <property type="project" value="UniProtKB-UniRule"/>
</dbReference>
<dbReference type="GO" id="GO:0071555">
    <property type="term" value="P:cell wall organization"/>
    <property type="evidence" value="ECO:0007669"/>
    <property type="project" value="UniProtKB-KW"/>
</dbReference>
<dbReference type="GO" id="GO:0009245">
    <property type="term" value="P:lipid A biosynthetic process"/>
    <property type="evidence" value="ECO:0007669"/>
    <property type="project" value="UniProtKB-UniRule"/>
</dbReference>
<dbReference type="GO" id="GO:0009252">
    <property type="term" value="P:peptidoglycan biosynthetic process"/>
    <property type="evidence" value="ECO:0007669"/>
    <property type="project" value="UniProtKB-UniRule"/>
</dbReference>
<dbReference type="GO" id="GO:0008360">
    <property type="term" value="P:regulation of cell shape"/>
    <property type="evidence" value="ECO:0007669"/>
    <property type="project" value="UniProtKB-KW"/>
</dbReference>
<dbReference type="GO" id="GO:0006048">
    <property type="term" value="P:UDP-N-acetylglucosamine biosynthetic process"/>
    <property type="evidence" value="ECO:0007669"/>
    <property type="project" value="UniProtKB-UniPathway"/>
</dbReference>
<dbReference type="CDD" id="cd02540">
    <property type="entry name" value="GT2_GlmU_N_bac"/>
    <property type="match status" value="1"/>
</dbReference>
<dbReference type="CDD" id="cd03353">
    <property type="entry name" value="LbH_GlmU_C"/>
    <property type="match status" value="1"/>
</dbReference>
<dbReference type="FunFam" id="3.90.550.10:FF:000006">
    <property type="entry name" value="Bifunctional protein GlmU"/>
    <property type="match status" value="1"/>
</dbReference>
<dbReference type="Gene3D" id="2.160.10.10">
    <property type="entry name" value="Hexapeptide repeat proteins"/>
    <property type="match status" value="1"/>
</dbReference>
<dbReference type="Gene3D" id="3.90.550.10">
    <property type="entry name" value="Spore Coat Polysaccharide Biosynthesis Protein SpsA, Chain A"/>
    <property type="match status" value="1"/>
</dbReference>
<dbReference type="HAMAP" id="MF_01631">
    <property type="entry name" value="GlmU"/>
    <property type="match status" value="1"/>
</dbReference>
<dbReference type="InterPro" id="IPR005882">
    <property type="entry name" value="Bifunctional_GlmU"/>
</dbReference>
<dbReference type="InterPro" id="IPR050065">
    <property type="entry name" value="GlmU-like"/>
</dbReference>
<dbReference type="InterPro" id="IPR038009">
    <property type="entry name" value="GlmU_C_LbH"/>
</dbReference>
<dbReference type="InterPro" id="IPR001451">
    <property type="entry name" value="Hexapep"/>
</dbReference>
<dbReference type="InterPro" id="IPR018357">
    <property type="entry name" value="Hexapep_transf_CS"/>
</dbReference>
<dbReference type="InterPro" id="IPR025877">
    <property type="entry name" value="MobA-like_NTP_Trfase"/>
</dbReference>
<dbReference type="InterPro" id="IPR029044">
    <property type="entry name" value="Nucleotide-diphossugar_trans"/>
</dbReference>
<dbReference type="InterPro" id="IPR011004">
    <property type="entry name" value="Trimer_LpxA-like_sf"/>
</dbReference>
<dbReference type="NCBIfam" id="TIGR01173">
    <property type="entry name" value="glmU"/>
    <property type="match status" value="1"/>
</dbReference>
<dbReference type="NCBIfam" id="NF006986">
    <property type="entry name" value="PRK09451.1"/>
    <property type="match status" value="1"/>
</dbReference>
<dbReference type="PANTHER" id="PTHR43584:SF3">
    <property type="entry name" value="BIFUNCTIONAL PROTEIN GLMU"/>
    <property type="match status" value="1"/>
</dbReference>
<dbReference type="PANTHER" id="PTHR43584">
    <property type="entry name" value="NUCLEOTIDYL TRANSFERASE"/>
    <property type="match status" value="1"/>
</dbReference>
<dbReference type="Pfam" id="PF00132">
    <property type="entry name" value="Hexapep"/>
    <property type="match status" value="2"/>
</dbReference>
<dbReference type="Pfam" id="PF12804">
    <property type="entry name" value="NTP_transf_3"/>
    <property type="match status" value="1"/>
</dbReference>
<dbReference type="SUPFAM" id="SSF53448">
    <property type="entry name" value="Nucleotide-diphospho-sugar transferases"/>
    <property type="match status" value="1"/>
</dbReference>
<dbReference type="SUPFAM" id="SSF51161">
    <property type="entry name" value="Trimeric LpxA-like enzymes"/>
    <property type="match status" value="1"/>
</dbReference>
<dbReference type="PROSITE" id="PS00101">
    <property type="entry name" value="HEXAPEP_TRANSFERASES"/>
    <property type="match status" value="1"/>
</dbReference>